<protein>
    <recommendedName>
        <fullName evidence="1">Large ribosomal subunit protein uL15</fullName>
    </recommendedName>
    <alternativeName>
        <fullName evidence="3">50S ribosomal protein L15</fullName>
    </alternativeName>
</protein>
<proteinExistence type="inferred from homology"/>
<sequence>MKLNELSPADGSTKKRMRVGRGVGSGKGKTAGRGVKGQNARSGVAVNGFEGGQMPIYMRLPKRGFTSPGSKNMSWVNLGRIAKAIEAGTLDASNVTEESLVAAGVVRKARDGIRLLAKGDAPQKLTITVTGASKAAVEAVEKAGGSVTVTGAPKDAAEE</sequence>
<comment type="function">
    <text evidence="1">Binds to the 23S rRNA.</text>
</comment>
<comment type="subunit">
    <text evidence="1">Part of the 50S ribosomal subunit.</text>
</comment>
<comment type="similarity">
    <text evidence="1">Belongs to the universal ribosomal protein uL15 family.</text>
</comment>
<name>RL15_HYPNA</name>
<keyword id="KW-1185">Reference proteome</keyword>
<keyword id="KW-0687">Ribonucleoprotein</keyword>
<keyword id="KW-0689">Ribosomal protein</keyword>
<keyword id="KW-0694">RNA-binding</keyword>
<keyword id="KW-0699">rRNA-binding</keyword>
<reference key="1">
    <citation type="journal article" date="2006" name="J. Bacteriol.">
        <title>Comparative genomic evidence for a close relationship between the dimorphic prosthecate bacteria Hyphomonas neptunium and Caulobacter crescentus.</title>
        <authorList>
            <person name="Badger J.H."/>
            <person name="Hoover T.R."/>
            <person name="Brun Y.V."/>
            <person name="Weiner R.M."/>
            <person name="Laub M.T."/>
            <person name="Alexandre G."/>
            <person name="Mrazek J."/>
            <person name="Ren Q."/>
            <person name="Paulsen I.T."/>
            <person name="Nelson K.E."/>
            <person name="Khouri H.M."/>
            <person name="Radune D."/>
            <person name="Sosa J."/>
            <person name="Dodson R.J."/>
            <person name="Sullivan S.A."/>
            <person name="Rosovitz M.J."/>
            <person name="Madupu R."/>
            <person name="Brinkac L.M."/>
            <person name="Durkin A.S."/>
            <person name="Daugherty S.C."/>
            <person name="Kothari S.P."/>
            <person name="Giglio M.G."/>
            <person name="Zhou L."/>
            <person name="Haft D.H."/>
            <person name="Selengut J.D."/>
            <person name="Davidsen T.M."/>
            <person name="Yang Q."/>
            <person name="Zafar N."/>
            <person name="Ward N.L."/>
        </authorList>
    </citation>
    <scope>NUCLEOTIDE SEQUENCE [LARGE SCALE GENOMIC DNA]</scope>
    <source>
        <strain>ATCC 15444</strain>
    </source>
</reference>
<feature type="chain" id="PRO_1000054475" description="Large ribosomal subunit protein uL15">
    <location>
        <begin position="1"/>
        <end position="159"/>
    </location>
</feature>
<feature type="region of interest" description="Disordered" evidence="2">
    <location>
        <begin position="1"/>
        <end position="39"/>
    </location>
</feature>
<feature type="compositionally biased region" description="Gly residues" evidence="2">
    <location>
        <begin position="21"/>
        <end position="35"/>
    </location>
</feature>
<organism>
    <name type="scientific">Hyphomonas neptunium (strain ATCC 15444)</name>
    <dbReference type="NCBI Taxonomy" id="228405"/>
    <lineage>
        <taxon>Bacteria</taxon>
        <taxon>Pseudomonadati</taxon>
        <taxon>Pseudomonadota</taxon>
        <taxon>Alphaproteobacteria</taxon>
        <taxon>Hyphomonadales</taxon>
        <taxon>Hyphomonadaceae</taxon>
        <taxon>Hyphomonas</taxon>
    </lineage>
</organism>
<dbReference type="EMBL" id="CP000158">
    <property type="protein sequence ID" value="ABI75451.1"/>
    <property type="molecule type" value="Genomic_DNA"/>
</dbReference>
<dbReference type="RefSeq" id="WP_011647807.1">
    <property type="nucleotide sequence ID" value="NC_008358.1"/>
</dbReference>
<dbReference type="SMR" id="Q0BYD3"/>
<dbReference type="STRING" id="228405.HNE_2832"/>
<dbReference type="KEGG" id="hne:HNE_2832"/>
<dbReference type="eggNOG" id="COG0200">
    <property type="taxonomic scope" value="Bacteria"/>
</dbReference>
<dbReference type="HOGENOM" id="CLU_055188_4_0_5"/>
<dbReference type="Proteomes" id="UP000001959">
    <property type="component" value="Chromosome"/>
</dbReference>
<dbReference type="GO" id="GO:0022625">
    <property type="term" value="C:cytosolic large ribosomal subunit"/>
    <property type="evidence" value="ECO:0007669"/>
    <property type="project" value="TreeGrafter"/>
</dbReference>
<dbReference type="GO" id="GO:0019843">
    <property type="term" value="F:rRNA binding"/>
    <property type="evidence" value="ECO:0007669"/>
    <property type="project" value="UniProtKB-UniRule"/>
</dbReference>
<dbReference type="GO" id="GO:0003735">
    <property type="term" value="F:structural constituent of ribosome"/>
    <property type="evidence" value="ECO:0007669"/>
    <property type="project" value="InterPro"/>
</dbReference>
<dbReference type="GO" id="GO:0006412">
    <property type="term" value="P:translation"/>
    <property type="evidence" value="ECO:0007669"/>
    <property type="project" value="UniProtKB-UniRule"/>
</dbReference>
<dbReference type="Gene3D" id="3.100.10.10">
    <property type="match status" value="1"/>
</dbReference>
<dbReference type="HAMAP" id="MF_01341">
    <property type="entry name" value="Ribosomal_uL15"/>
    <property type="match status" value="1"/>
</dbReference>
<dbReference type="InterPro" id="IPR030878">
    <property type="entry name" value="Ribosomal_uL15"/>
</dbReference>
<dbReference type="InterPro" id="IPR021131">
    <property type="entry name" value="Ribosomal_uL15/eL18"/>
</dbReference>
<dbReference type="InterPro" id="IPR036227">
    <property type="entry name" value="Ribosomal_uL15/eL18_sf"/>
</dbReference>
<dbReference type="InterPro" id="IPR005749">
    <property type="entry name" value="Ribosomal_uL15_bac-type"/>
</dbReference>
<dbReference type="InterPro" id="IPR001196">
    <property type="entry name" value="Ribosomal_uL15_CS"/>
</dbReference>
<dbReference type="NCBIfam" id="TIGR01071">
    <property type="entry name" value="rplO_bact"/>
    <property type="match status" value="1"/>
</dbReference>
<dbReference type="PANTHER" id="PTHR12934">
    <property type="entry name" value="50S RIBOSOMAL PROTEIN L15"/>
    <property type="match status" value="1"/>
</dbReference>
<dbReference type="PANTHER" id="PTHR12934:SF11">
    <property type="entry name" value="LARGE RIBOSOMAL SUBUNIT PROTEIN UL15M"/>
    <property type="match status" value="1"/>
</dbReference>
<dbReference type="Pfam" id="PF00828">
    <property type="entry name" value="Ribosomal_L27A"/>
    <property type="match status" value="1"/>
</dbReference>
<dbReference type="SUPFAM" id="SSF52080">
    <property type="entry name" value="Ribosomal proteins L15p and L18e"/>
    <property type="match status" value="1"/>
</dbReference>
<dbReference type="PROSITE" id="PS00475">
    <property type="entry name" value="RIBOSOMAL_L15"/>
    <property type="match status" value="1"/>
</dbReference>
<gene>
    <name evidence="1" type="primary">rplO</name>
    <name type="ordered locus">HNE_2832</name>
</gene>
<evidence type="ECO:0000255" key="1">
    <source>
        <dbReference type="HAMAP-Rule" id="MF_01341"/>
    </source>
</evidence>
<evidence type="ECO:0000256" key="2">
    <source>
        <dbReference type="SAM" id="MobiDB-lite"/>
    </source>
</evidence>
<evidence type="ECO:0000305" key="3"/>
<accession>Q0BYD3</accession>